<keyword id="KW-0002">3D-structure</keyword>
<keyword id="KW-0025">Alternative splicing</keyword>
<keyword id="KW-0963">Cytoplasm</keyword>
<keyword id="KW-0413">Isomerase</keyword>
<keyword id="KW-1267">Proteomics identification</keyword>
<keyword id="KW-1185">Reference proteome</keyword>
<keyword id="KW-0697">Rotamase</keyword>
<keyword id="KW-0703">Sarcoplasmic reticulum</keyword>
<reference key="1">
    <citation type="journal article" date="1994" name="Biochem. Biophys. Res. Commun.">
        <title>Molecular cloning and expression of a novel human gene that is highly homologous to human FK506-binding protein 12kDa (hFKBP-12) and characterization of two alternatively spliced transcripts.</title>
        <authorList>
            <person name="Arakawa H."/>
            <person name="Nagase H."/>
            <person name="Hayashi N."/>
            <person name="Fujiwara T."/>
            <person name="Ogawa M."/>
            <person name="Shin S."/>
            <person name="Nakamura Y."/>
        </authorList>
    </citation>
    <scope>NUCLEOTIDE SEQUENCE [MRNA] (ISOFORMS 1 AND 2)</scope>
    <scope>FUNCTION</scope>
    <scope>CATALYTIC ACTIVITY</scope>
    <source>
        <tissue>Fetal brain</tissue>
    </source>
</reference>
<reference key="2">
    <citation type="journal article" date="1995" name="J. Biol. Chem.">
        <title>A novel FK506 binding protein can mediate the immunosuppressive effects of FK506 and is associated with the cardiac ryanodine receptor.</title>
        <authorList>
            <person name="Lam E."/>
            <person name="Martin M.M."/>
            <person name="Timerman A.P."/>
            <person name="Sabers C."/>
            <person name="Fleischer S."/>
            <person name="Lukas T."/>
            <person name="Abraham R.T."/>
            <person name="O'Keefe S.J."/>
            <person name="O'Neill E.A."/>
            <person name="Wiederrecht G.J."/>
        </authorList>
    </citation>
    <scope>NUCLEOTIDE SEQUENCE [MRNA] (ISOFORM 1)</scope>
    <scope>FUNCTION</scope>
    <scope>CATALYTIC ACTIVITY</scope>
    <source>
        <tissue>Brain</tissue>
        <tissue>Heart muscle</tissue>
    </source>
</reference>
<reference key="3">
    <citation type="submission" date="2000-11" db="EMBL/GenBank/DDBJ databases">
        <title>FKBP9: an alternative splice variant of the FK506-binding protein FKBP12.6 expressed in the human heart.</title>
        <authorList>
            <person name="Seidler T."/>
            <person name="Kussebi N."/>
            <person name="Prestle J."/>
        </authorList>
    </citation>
    <scope>NUCLEOTIDE SEQUENCE [MRNA] (ISOFORM 2)</scope>
</reference>
<reference key="4">
    <citation type="journal article" date="2005" name="Gene">
        <title>Genomic organization, chromosomal localization, and promoter of human gene for FK506-binding protein 12.6.</title>
        <authorList>
            <person name="Nakazawa T."/>
            <person name="Takasawa S."/>
            <person name="Noguchi N."/>
            <person name="Nata K."/>
            <person name="Tohgo A."/>
            <person name="Mori M."/>
            <person name="Nakagawara K."/>
            <person name="Akiyama T."/>
            <person name="Ikeda T."/>
            <person name="Yamauchi A."/>
            <person name="Takahashi I."/>
            <person name="Yoshikawa T."/>
            <person name="Okamoto H."/>
        </authorList>
    </citation>
    <scope>NUCLEOTIDE SEQUENCE [GENOMIC DNA]</scope>
</reference>
<reference key="5">
    <citation type="journal article" date="2005" name="Nature">
        <title>Generation and annotation of the DNA sequences of human chromosomes 2 and 4.</title>
        <authorList>
            <person name="Hillier L.W."/>
            <person name="Graves T.A."/>
            <person name="Fulton R.S."/>
            <person name="Fulton L.A."/>
            <person name="Pepin K.H."/>
            <person name="Minx P."/>
            <person name="Wagner-McPherson C."/>
            <person name="Layman D."/>
            <person name="Wylie K."/>
            <person name="Sekhon M."/>
            <person name="Becker M.C."/>
            <person name="Fewell G.A."/>
            <person name="Delehaunty K.D."/>
            <person name="Miner T.L."/>
            <person name="Nash W.E."/>
            <person name="Kremitzki C."/>
            <person name="Oddy L."/>
            <person name="Du H."/>
            <person name="Sun H."/>
            <person name="Bradshaw-Cordum H."/>
            <person name="Ali J."/>
            <person name="Carter J."/>
            <person name="Cordes M."/>
            <person name="Harris A."/>
            <person name="Isak A."/>
            <person name="van Brunt A."/>
            <person name="Nguyen C."/>
            <person name="Du F."/>
            <person name="Courtney L."/>
            <person name="Kalicki J."/>
            <person name="Ozersky P."/>
            <person name="Abbott S."/>
            <person name="Armstrong J."/>
            <person name="Belter E.A."/>
            <person name="Caruso L."/>
            <person name="Cedroni M."/>
            <person name="Cotton M."/>
            <person name="Davidson T."/>
            <person name="Desai A."/>
            <person name="Elliott G."/>
            <person name="Erb T."/>
            <person name="Fronick C."/>
            <person name="Gaige T."/>
            <person name="Haakenson W."/>
            <person name="Haglund K."/>
            <person name="Holmes A."/>
            <person name="Harkins R."/>
            <person name="Kim K."/>
            <person name="Kruchowski S.S."/>
            <person name="Strong C.M."/>
            <person name="Grewal N."/>
            <person name="Goyea E."/>
            <person name="Hou S."/>
            <person name="Levy A."/>
            <person name="Martinka S."/>
            <person name="Mead K."/>
            <person name="McLellan M.D."/>
            <person name="Meyer R."/>
            <person name="Randall-Maher J."/>
            <person name="Tomlinson C."/>
            <person name="Dauphin-Kohlberg S."/>
            <person name="Kozlowicz-Reilly A."/>
            <person name="Shah N."/>
            <person name="Swearengen-Shahid S."/>
            <person name="Snider J."/>
            <person name="Strong J.T."/>
            <person name="Thompson J."/>
            <person name="Yoakum M."/>
            <person name="Leonard S."/>
            <person name="Pearman C."/>
            <person name="Trani L."/>
            <person name="Radionenko M."/>
            <person name="Waligorski J.E."/>
            <person name="Wang C."/>
            <person name="Rock S.M."/>
            <person name="Tin-Wollam A.-M."/>
            <person name="Maupin R."/>
            <person name="Latreille P."/>
            <person name="Wendl M.C."/>
            <person name="Yang S.-P."/>
            <person name="Pohl C."/>
            <person name="Wallis J.W."/>
            <person name="Spieth J."/>
            <person name="Bieri T.A."/>
            <person name="Berkowicz N."/>
            <person name="Nelson J.O."/>
            <person name="Osborne J."/>
            <person name="Ding L."/>
            <person name="Meyer R."/>
            <person name="Sabo A."/>
            <person name="Shotland Y."/>
            <person name="Sinha P."/>
            <person name="Wohldmann P.E."/>
            <person name="Cook L.L."/>
            <person name="Hickenbotham M.T."/>
            <person name="Eldred J."/>
            <person name="Williams D."/>
            <person name="Jones T.A."/>
            <person name="She X."/>
            <person name="Ciccarelli F.D."/>
            <person name="Izaurralde E."/>
            <person name="Taylor J."/>
            <person name="Schmutz J."/>
            <person name="Myers R.M."/>
            <person name="Cox D.R."/>
            <person name="Huang X."/>
            <person name="McPherson J.D."/>
            <person name="Mardis E.R."/>
            <person name="Clifton S.W."/>
            <person name="Warren W.C."/>
            <person name="Chinwalla A.T."/>
            <person name="Eddy S.R."/>
            <person name="Marra M.A."/>
            <person name="Ovcharenko I."/>
            <person name="Furey T.S."/>
            <person name="Miller W."/>
            <person name="Eichler E.E."/>
            <person name="Bork P."/>
            <person name="Suyama M."/>
            <person name="Torrents D."/>
            <person name="Waterston R.H."/>
            <person name="Wilson R.K."/>
        </authorList>
    </citation>
    <scope>NUCLEOTIDE SEQUENCE [LARGE SCALE GENOMIC DNA]</scope>
</reference>
<reference key="6">
    <citation type="submission" date="2005-09" db="EMBL/GenBank/DDBJ databases">
        <authorList>
            <person name="Mural R.J."/>
            <person name="Istrail S."/>
            <person name="Sutton G.G."/>
            <person name="Florea L."/>
            <person name="Halpern A.L."/>
            <person name="Mobarry C.M."/>
            <person name="Lippert R."/>
            <person name="Walenz B."/>
            <person name="Shatkay H."/>
            <person name="Dew I."/>
            <person name="Miller J.R."/>
            <person name="Flanigan M.J."/>
            <person name="Edwards N.J."/>
            <person name="Bolanos R."/>
            <person name="Fasulo D."/>
            <person name="Halldorsson B.V."/>
            <person name="Hannenhalli S."/>
            <person name="Turner R."/>
            <person name="Yooseph S."/>
            <person name="Lu F."/>
            <person name="Nusskern D.R."/>
            <person name="Shue B.C."/>
            <person name="Zheng X.H."/>
            <person name="Zhong F."/>
            <person name="Delcher A.L."/>
            <person name="Huson D.H."/>
            <person name="Kravitz S.A."/>
            <person name="Mouchard L."/>
            <person name="Reinert K."/>
            <person name="Remington K.A."/>
            <person name="Clark A.G."/>
            <person name="Waterman M.S."/>
            <person name="Eichler E.E."/>
            <person name="Adams M.D."/>
            <person name="Hunkapiller M.W."/>
            <person name="Myers E.W."/>
            <person name="Venter J.C."/>
        </authorList>
    </citation>
    <scope>NUCLEOTIDE SEQUENCE [LARGE SCALE GENOMIC DNA]</scope>
</reference>
<reference key="7">
    <citation type="journal article" date="2004" name="Genome Res.">
        <title>The status, quality, and expansion of the NIH full-length cDNA project: the Mammalian Gene Collection (MGC).</title>
        <authorList>
            <consortium name="The MGC Project Team"/>
        </authorList>
    </citation>
    <scope>NUCLEOTIDE SEQUENCE [LARGE SCALE MRNA] (ISOFORM 2)</scope>
    <source>
        <tissue>Brain</tissue>
    </source>
</reference>
<reference key="8">
    <citation type="journal article" date="2000" name="Cell">
        <title>PKA phosphorylation dissociates FKBP12.6 from the calcium release channel (ryanodine receptor): defective regulation in failing hearts.</title>
        <authorList>
            <person name="Marx S.O."/>
            <person name="Reiken S."/>
            <person name="Hisamatsu Y."/>
            <person name="Jayaraman T."/>
            <person name="Burkhoff D."/>
            <person name="Rosemblit N."/>
            <person name="Marks A.R."/>
        </authorList>
    </citation>
    <scope>IDENTIFICATION IN A COMPLEX WITH RYR2; PP1; PP2A AKAP6 AND PKA</scope>
    <scope>INTERACTION WITH RYR2</scope>
    <scope>TISSUE SPECIFICITY</scope>
</reference>
<reference key="9">
    <citation type="journal article" date="2000" name="Acta Crystallogr. D">
        <title>Structure of FKBP12.6 in complex with rapamycin.</title>
        <authorList>
            <person name="Deivanayagam C.C."/>
            <person name="Carson M."/>
            <person name="Thotakura A."/>
            <person name="Narayana S.V."/>
            <person name="Chodavarapu R.S."/>
        </authorList>
    </citation>
    <scope>X-RAY CRYSTALLOGRAPHY (2.0 ANGSTROMS)</scope>
</reference>
<dbReference type="EC" id="5.2.1.8" evidence="4 5"/>
<dbReference type="EMBL" id="S69815">
    <property type="protein sequence ID" value="AAB30684.1"/>
    <property type="molecule type" value="mRNA"/>
</dbReference>
<dbReference type="EMBL" id="D38037">
    <property type="protein sequence ID" value="BAA07232.1"/>
    <property type="molecule type" value="mRNA"/>
</dbReference>
<dbReference type="EMBL" id="L37086">
    <property type="protein sequence ID" value="AAC37581.1"/>
    <property type="molecule type" value="mRNA"/>
</dbReference>
<dbReference type="EMBL" id="S69800">
    <property type="protein sequence ID" value="AAB30685.1"/>
    <property type="molecule type" value="mRNA"/>
</dbReference>
<dbReference type="EMBL" id="AF322070">
    <property type="protein sequence ID" value="AAK11191.1"/>
    <property type="molecule type" value="mRNA"/>
</dbReference>
<dbReference type="EMBL" id="AB190793">
    <property type="protein sequence ID" value="BAE44300.1"/>
    <property type="molecule type" value="Genomic_DNA"/>
</dbReference>
<dbReference type="EMBL" id="AC008073">
    <property type="protein sequence ID" value="AAY14663.1"/>
    <property type="molecule type" value="Genomic_DNA"/>
</dbReference>
<dbReference type="EMBL" id="CH471053">
    <property type="protein sequence ID" value="EAX00769.1"/>
    <property type="molecule type" value="Genomic_DNA"/>
</dbReference>
<dbReference type="EMBL" id="BC002614">
    <property type="protein sequence ID" value="AAH02614.1"/>
    <property type="molecule type" value="mRNA"/>
</dbReference>
<dbReference type="CCDS" id="CCDS1706.1"/>
<dbReference type="CCDS" id="CCDS33153.1">
    <molecule id="P68106-2"/>
</dbReference>
<dbReference type="PIR" id="JC2188">
    <property type="entry name" value="JC2188"/>
</dbReference>
<dbReference type="RefSeq" id="NP_004107.1">
    <molecule id="P68106-1"/>
    <property type="nucleotide sequence ID" value="NM_004116.5"/>
</dbReference>
<dbReference type="RefSeq" id="NP_473374.1">
    <molecule id="P68106-2"/>
    <property type="nucleotide sequence ID" value="NM_054033.4"/>
</dbReference>
<dbReference type="PDB" id="1C9H">
    <property type="method" value="X-ray"/>
    <property type="resolution" value="2.00 A"/>
    <property type="chains" value="A=2-108"/>
</dbReference>
<dbReference type="PDB" id="4C02">
    <property type="method" value="X-ray"/>
    <property type="resolution" value="2.17 A"/>
    <property type="chains" value="B=1-108"/>
</dbReference>
<dbReference type="PDB" id="4IQ2">
    <property type="method" value="X-ray"/>
    <property type="resolution" value="1.70 A"/>
    <property type="chains" value="A/B=2-108"/>
</dbReference>
<dbReference type="PDB" id="4IQC">
    <property type="method" value="X-ray"/>
    <property type="resolution" value="1.90 A"/>
    <property type="chains" value="A/B=2-108"/>
</dbReference>
<dbReference type="PDB" id="5HKG">
    <property type="method" value="X-ray"/>
    <property type="resolution" value="1.50 A"/>
    <property type="chains" value="A=2-108"/>
</dbReference>
<dbReference type="PDB" id="5L1D">
    <property type="method" value="EM"/>
    <property type="resolution" value="10.50 A"/>
    <property type="chains" value="B/D/F/H=2-108"/>
</dbReference>
<dbReference type="PDB" id="5T15">
    <property type="method" value="EM"/>
    <property type="resolution" value="3.80 A"/>
    <property type="chains" value="A/F/H/J=1-108"/>
</dbReference>
<dbReference type="PDB" id="5T9M">
    <property type="method" value="EM"/>
    <property type="resolution" value="3.80 A"/>
    <property type="chains" value="A/F/H/J=1-108"/>
</dbReference>
<dbReference type="PDB" id="5T9N">
    <property type="method" value="EM"/>
    <property type="resolution" value="3.80 A"/>
    <property type="chains" value="A/F/H/J=1-108"/>
</dbReference>
<dbReference type="PDB" id="5T9R">
    <property type="method" value="EM"/>
    <property type="resolution" value="3.80 A"/>
    <property type="chains" value="A/F/H/J=1-108"/>
</dbReference>
<dbReference type="PDB" id="5T9S">
    <property type="method" value="EM"/>
    <property type="resolution" value="3.80 A"/>
    <property type="chains" value="A/F/H/J=1-108"/>
</dbReference>
<dbReference type="PDB" id="5T9V">
    <property type="method" value="EM"/>
    <property type="resolution" value="3.80 A"/>
    <property type="chains" value="A/F/H/J=1-108"/>
</dbReference>
<dbReference type="PDB" id="5TA3">
    <property type="method" value="EM"/>
    <property type="resolution" value="3.80 A"/>
    <property type="chains" value="A/F/H/J=1-108"/>
</dbReference>
<dbReference type="PDB" id="5TAL">
    <property type="method" value="EM"/>
    <property type="resolution" value="3.80 A"/>
    <property type="chains" value="A/F/H/J=1-108"/>
</dbReference>
<dbReference type="PDB" id="5TAM">
    <property type="method" value="EM"/>
    <property type="resolution" value="3.80 A"/>
    <property type="chains" value="A/F/H/J=1-108"/>
</dbReference>
<dbReference type="PDB" id="5TAN">
    <property type="method" value="EM"/>
    <property type="resolution" value="3.80 A"/>
    <property type="chains" value="A/F/H/J=1-108"/>
</dbReference>
<dbReference type="PDB" id="5TAP">
    <property type="method" value="EM"/>
    <property type="resolution" value="3.80 A"/>
    <property type="chains" value="A/F/H/J=1-108"/>
</dbReference>
<dbReference type="PDB" id="5TAQ">
    <property type="method" value="EM"/>
    <property type="resolution" value="3.80 A"/>
    <property type="chains" value="A/F/H/J=1-108"/>
</dbReference>
<dbReference type="PDB" id="5TAS">
    <property type="method" value="EM"/>
    <property type="resolution" value="3.80 A"/>
    <property type="chains" value="A/F/H/J=1-108"/>
</dbReference>
<dbReference type="PDB" id="5TAT">
    <property type="method" value="EM"/>
    <property type="resolution" value="3.80 A"/>
    <property type="chains" value="A/F/H/J=1-108"/>
</dbReference>
<dbReference type="PDB" id="5TAU">
    <property type="method" value="EM"/>
    <property type="resolution" value="3.80 A"/>
    <property type="chains" value="A/F/H/J=1-108"/>
</dbReference>
<dbReference type="PDB" id="5TAV">
    <property type="method" value="EM"/>
    <property type="resolution" value="3.80 A"/>
    <property type="chains" value="A/F/H/J=1-108"/>
</dbReference>
<dbReference type="PDB" id="5TAW">
    <property type="method" value="EM"/>
    <property type="resolution" value="3.80 A"/>
    <property type="chains" value="A/F/H/J=1-108"/>
</dbReference>
<dbReference type="PDB" id="5TAX">
    <property type="method" value="EM"/>
    <property type="resolution" value="3.80 A"/>
    <property type="chains" value="A/F/H/J=1-108"/>
</dbReference>
<dbReference type="PDB" id="5TAY">
    <property type="method" value="EM"/>
    <property type="resolution" value="3.80 A"/>
    <property type="chains" value="A/F/H/J=1-108"/>
</dbReference>
<dbReference type="PDB" id="5TAZ">
    <property type="method" value="EM"/>
    <property type="resolution" value="3.80 A"/>
    <property type="chains" value="A/F/H/J=1-108"/>
</dbReference>
<dbReference type="PDB" id="5TB0">
    <property type="method" value="EM"/>
    <property type="resolution" value="4.40 A"/>
    <property type="chains" value="A/F/H/J=1-108"/>
</dbReference>
<dbReference type="PDB" id="5TB1">
    <property type="method" value="EM"/>
    <property type="resolution" value="3.80 A"/>
    <property type="chains" value="A/F/H/J=1-108"/>
</dbReference>
<dbReference type="PDB" id="5TB2">
    <property type="method" value="EM"/>
    <property type="resolution" value="3.80 A"/>
    <property type="chains" value="A/F/H/J=1-108"/>
</dbReference>
<dbReference type="PDB" id="5TB3">
    <property type="method" value="EM"/>
    <property type="resolution" value="3.80 A"/>
    <property type="chains" value="A/F/H/J=1-108"/>
</dbReference>
<dbReference type="PDB" id="5TB4">
    <property type="method" value="EM"/>
    <property type="resolution" value="3.80 A"/>
    <property type="chains" value="A/F/H/J=1-108"/>
</dbReference>
<dbReference type="PDB" id="6JGZ">
    <property type="method" value="EM"/>
    <property type="resolution" value="4.60 A"/>
    <property type="chains" value="A/C/E/G=1-108"/>
</dbReference>
<dbReference type="PDB" id="6JH6">
    <property type="method" value="EM"/>
    <property type="resolution" value="4.80 A"/>
    <property type="chains" value="A/C/E/G=1-108"/>
</dbReference>
<dbReference type="PDB" id="6JHN">
    <property type="method" value="EM"/>
    <property type="resolution" value="4.50 A"/>
    <property type="chains" value="B/D/F/H=1-108"/>
</dbReference>
<dbReference type="PDB" id="6JI0">
    <property type="method" value="EM"/>
    <property type="resolution" value="4.20 A"/>
    <property type="chains" value="B/D/F/H=1-108"/>
</dbReference>
<dbReference type="PDB" id="6JI8">
    <property type="method" value="EM"/>
    <property type="resolution" value="3.60 A"/>
    <property type="chains" value="B/E/H/K=1-108"/>
</dbReference>
<dbReference type="PDB" id="6JII">
    <property type="method" value="EM"/>
    <property type="resolution" value="4.20 A"/>
    <property type="chains" value="A/D/G/J=1-108"/>
</dbReference>
<dbReference type="PDB" id="6JIU">
    <property type="method" value="EM"/>
    <property type="resolution" value="4.20 A"/>
    <property type="chains" value="B/E/H/K=1-108"/>
</dbReference>
<dbReference type="PDB" id="6JIY">
    <property type="method" value="EM"/>
    <property type="resolution" value="3.90 A"/>
    <property type="chains" value="B/E/H/K=1-108"/>
</dbReference>
<dbReference type="PDB" id="6JRR">
    <property type="method" value="EM"/>
    <property type="resolution" value="3.90 A"/>
    <property type="chains" value="B/D/F/H=1-108"/>
</dbReference>
<dbReference type="PDB" id="6JRS">
    <property type="method" value="EM"/>
    <property type="resolution" value="3.70 A"/>
    <property type="chains" value="B/E/H/K=1-108"/>
</dbReference>
<dbReference type="PDB" id="6M2W">
    <property type="method" value="EM"/>
    <property type="resolution" value="3.80 A"/>
    <property type="chains" value="B/E/H/K=2-108"/>
</dbReference>
<dbReference type="PDB" id="6PV6">
    <property type="method" value="EM"/>
    <property type="resolution" value="4.50 A"/>
    <property type="chains" value="A/F/H/J=1-108"/>
</dbReference>
<dbReference type="PDB" id="6W1N">
    <property type="method" value="EM"/>
    <property type="resolution" value="4.00 A"/>
    <property type="chains" value="A/C/E/G=2-108"/>
</dbReference>
<dbReference type="PDB" id="6WOT">
    <property type="method" value="EM"/>
    <property type="resolution" value="3.54 A"/>
    <property type="chains" value="E/F/G/H=2-108"/>
</dbReference>
<dbReference type="PDB" id="6WOU">
    <property type="method" value="EM"/>
    <property type="resolution" value="3.27 A"/>
    <property type="chains" value="E/F/G/H=2-108"/>
</dbReference>
<dbReference type="PDB" id="6WOV">
    <property type="method" value="EM"/>
    <property type="resolution" value="5.10 A"/>
    <property type="chains" value="E/F/G/H=2-108"/>
</dbReference>
<dbReference type="PDB" id="6X32">
    <property type="method" value="EM"/>
    <property type="resolution" value="3.80 A"/>
    <property type="chains" value="A/D/G/J=2-108"/>
</dbReference>
<dbReference type="PDB" id="6X33">
    <property type="method" value="EM"/>
    <property type="resolution" value="4.20 A"/>
    <property type="chains" value="A/D/G/J=2-108"/>
</dbReference>
<dbReference type="PDB" id="6X34">
    <property type="method" value="EM"/>
    <property type="resolution" value="4.70 A"/>
    <property type="chains" value="A/C/E/G=2-107"/>
</dbReference>
<dbReference type="PDB" id="6X35">
    <property type="method" value="EM"/>
    <property type="resolution" value="4.20 A"/>
    <property type="chains" value="A/D/G/J=2-108"/>
</dbReference>
<dbReference type="PDB" id="6X36">
    <property type="method" value="EM"/>
    <property type="resolution" value="4.70 A"/>
    <property type="chains" value="A/D/G/J=2-108"/>
</dbReference>
<dbReference type="PDB" id="7CF9">
    <property type="method" value="EM"/>
    <property type="resolution" value="4.70 A"/>
    <property type="chains" value="B/D/F/H=2-108"/>
</dbReference>
<dbReference type="PDB" id="7JMF">
    <property type="method" value="EM"/>
    <property type="resolution" value="4.50 A"/>
    <property type="chains" value="A/F/H/J=1-108"/>
</dbReference>
<dbReference type="PDB" id="7JMG">
    <property type="method" value="EM"/>
    <property type="resolution" value="4.50 A"/>
    <property type="chains" value="A/F/H/J=2-108"/>
</dbReference>
<dbReference type="PDB" id="7JMH">
    <property type="method" value="EM"/>
    <property type="resolution" value="4.50 A"/>
    <property type="chains" value="A/F/H/J=2-108"/>
</dbReference>
<dbReference type="PDB" id="7JMI">
    <property type="method" value="EM"/>
    <property type="resolution" value="4.50 A"/>
    <property type="chains" value="A/F/H/J=2-108"/>
</dbReference>
<dbReference type="PDB" id="7JMJ">
    <property type="method" value="EM"/>
    <property type="resolution" value="4.50 A"/>
    <property type="chains" value="A/F/H/J=2-108"/>
</dbReference>
<dbReference type="PDB" id="7M6A">
    <property type="method" value="EM"/>
    <property type="resolution" value="3.36 A"/>
    <property type="chains" value="F/H/J/O=1-108"/>
</dbReference>
<dbReference type="PDB" id="7M6L">
    <property type="method" value="EM"/>
    <property type="resolution" value="3.98 A"/>
    <property type="chains" value="F/H/J/O=1-108"/>
</dbReference>
<dbReference type="PDB" id="7T64">
    <property type="method" value="EM"/>
    <property type="resolution" value="4.00 A"/>
    <property type="chains" value="E/F/G/H=2-108"/>
</dbReference>
<dbReference type="PDB" id="7T65">
    <property type="method" value="EM"/>
    <property type="resolution" value="4.05 A"/>
    <property type="chains" value="E/F/G/H=2-108"/>
</dbReference>
<dbReference type="PDB" id="7U9Q">
    <property type="method" value="EM"/>
    <property type="resolution" value="3.11 A"/>
    <property type="chains" value="E/F/G/H=1-108"/>
</dbReference>
<dbReference type="PDB" id="7U9R">
    <property type="method" value="EM"/>
    <property type="resolution" value="3.69 A"/>
    <property type="chains" value="E/F/G/H=1-108"/>
</dbReference>
<dbReference type="PDB" id="7U9T">
    <property type="method" value="EM"/>
    <property type="resolution" value="2.68 A"/>
    <property type="chains" value="E/F/G/H=1-108"/>
</dbReference>
<dbReference type="PDB" id="7U9X">
    <property type="method" value="EM"/>
    <property type="resolution" value="2.58 A"/>
    <property type="chains" value="E/F/G/H=1-108"/>
</dbReference>
<dbReference type="PDB" id="7U9Z">
    <property type="method" value="EM"/>
    <property type="resolution" value="3.29 A"/>
    <property type="chains" value="E/F/G/H=1-108"/>
</dbReference>
<dbReference type="PDB" id="7UA1">
    <property type="method" value="EM"/>
    <property type="resolution" value="2.99 A"/>
    <property type="chains" value="E/F/G/H=1-108"/>
</dbReference>
<dbReference type="PDB" id="7UA3">
    <property type="method" value="EM"/>
    <property type="resolution" value="2.97 A"/>
    <property type="chains" value="E/F/G/H=1-108"/>
</dbReference>
<dbReference type="PDB" id="7UA4">
    <property type="method" value="EM"/>
    <property type="resolution" value="2.93 A"/>
    <property type="chains" value="E/F/G/H=1-108"/>
</dbReference>
<dbReference type="PDB" id="7UA5">
    <property type="method" value="EM"/>
    <property type="resolution" value="2.83 A"/>
    <property type="chains" value="E/F/G/H=1-108"/>
</dbReference>
<dbReference type="PDB" id="7UA9">
    <property type="method" value="EM"/>
    <property type="resolution" value="3.59 A"/>
    <property type="chains" value="E/F/G/H=1-108"/>
</dbReference>
<dbReference type="PDB" id="7VML">
    <property type="method" value="EM"/>
    <property type="resolution" value="3.30 A"/>
    <property type="chains" value="G/H/I/J=2-108"/>
</dbReference>
<dbReference type="PDB" id="7VMM">
    <property type="method" value="EM"/>
    <property type="resolution" value="3.50 A"/>
    <property type="chains" value="G/H/I/J=2-108"/>
</dbReference>
<dbReference type="PDB" id="7VMN">
    <property type="method" value="EM"/>
    <property type="resolution" value="3.50 A"/>
    <property type="chains" value="G/H/I/J=2-108"/>
</dbReference>
<dbReference type="PDB" id="7VMO">
    <property type="method" value="EM"/>
    <property type="resolution" value="3.50 A"/>
    <property type="chains" value="G/H/I/J=2-108"/>
</dbReference>
<dbReference type="PDB" id="7VMP">
    <property type="method" value="EM"/>
    <property type="resolution" value="3.50 A"/>
    <property type="chains" value="G/H/I/J=2-108"/>
</dbReference>
<dbReference type="PDB" id="7VMQ">
    <property type="method" value="EM"/>
    <property type="resolution" value="3.70 A"/>
    <property type="chains" value="G/H/I/J=2-108"/>
</dbReference>
<dbReference type="PDB" id="7VMR">
    <property type="method" value="EM"/>
    <property type="resolution" value="3.30 A"/>
    <property type="chains" value="G/H/I/J=2-108"/>
</dbReference>
<dbReference type="PDB" id="7VMS">
    <property type="method" value="EM"/>
    <property type="resolution" value="3.80 A"/>
    <property type="chains" value="G/H/I/J=2-108"/>
</dbReference>
<dbReference type="PDB" id="8DTY">
    <property type="method" value="EM"/>
    <property type="resolution" value="3.50 A"/>
    <property type="chains" value="E/F/G/H=2-108"/>
</dbReference>
<dbReference type="PDB" id="8DTZ">
    <property type="method" value="EM"/>
    <property type="resolution" value="3.60 A"/>
    <property type="chains" value="E/F/G/H=2-108"/>
</dbReference>
<dbReference type="PDB" id="8DUJ">
    <property type="method" value="EM"/>
    <property type="resolution" value="3.70 A"/>
    <property type="chains" value="B/E/H/K=2-108"/>
</dbReference>
<dbReference type="PDB" id="8DVE">
    <property type="method" value="EM"/>
    <property type="resolution" value="3.84 A"/>
    <property type="chains" value="B/E/H/K=2-108"/>
</dbReference>
<dbReference type="PDB" id="8DVV">
    <property type="method" value="EM"/>
    <property type="resolution" value="3.68 A"/>
    <property type="chains" value="E/F/G/H=2-108"/>
</dbReference>
<dbReference type="PDB" id="8SEN">
    <property type="method" value="EM"/>
    <property type="resolution" value="3.49 A"/>
    <property type="chains" value="E/F/G/H=2-108"/>
</dbReference>
<dbReference type="PDB" id="8SEO">
    <property type="method" value="EM"/>
    <property type="resolution" value="3.92 A"/>
    <property type="chains" value="E/F/G/H=2-108"/>
</dbReference>
<dbReference type="PDB" id="8SEP">
    <property type="method" value="EM"/>
    <property type="resolution" value="3.57 A"/>
    <property type="chains" value="E/F/G/H=2-108"/>
</dbReference>
<dbReference type="PDB" id="8SEQ">
    <property type="method" value="EM"/>
    <property type="resolution" value="3.40 A"/>
    <property type="chains" value="E/F/G/H=2-108"/>
</dbReference>
<dbReference type="PDB" id="8SER">
    <property type="method" value="EM"/>
    <property type="resolution" value="3.42 A"/>
    <property type="chains" value="E/F/G/H=2-108"/>
</dbReference>
<dbReference type="PDB" id="8SES">
    <property type="method" value="EM"/>
    <property type="resolution" value="3.98 A"/>
    <property type="chains" value="E/F/G/H=2-108"/>
</dbReference>
<dbReference type="PDB" id="8SET">
    <property type="method" value="EM"/>
    <property type="resolution" value="3.42 A"/>
    <property type="chains" value="E/F/G/H=2-108"/>
</dbReference>
<dbReference type="PDB" id="8UQ2">
    <property type="method" value="EM"/>
    <property type="resolution" value="2.98 A"/>
    <property type="chains" value="E/F/G/H=1-108"/>
</dbReference>
<dbReference type="PDB" id="8UQ3">
    <property type="method" value="EM"/>
    <property type="resolution" value="3.18 A"/>
    <property type="chains" value="E/F/G/H=1-108"/>
</dbReference>
<dbReference type="PDB" id="8UQ4">
    <property type="method" value="EM"/>
    <property type="resolution" value="3.64 A"/>
    <property type="chains" value="E/F/G/H=1-108"/>
</dbReference>
<dbReference type="PDB" id="8UXC">
    <property type="method" value="EM"/>
    <property type="resolution" value="2.86 A"/>
    <property type="chains" value="E/F/G/H=1-108"/>
</dbReference>
<dbReference type="PDB" id="8UXE">
    <property type="method" value="EM"/>
    <property type="resolution" value="3.53 A"/>
    <property type="chains" value="E/F/G/H=1-108"/>
</dbReference>
<dbReference type="PDB" id="8UXF">
    <property type="method" value="EM"/>
    <property type="resolution" value="3.13 A"/>
    <property type="chains" value="E/F/G/H=1-108"/>
</dbReference>
<dbReference type="PDB" id="8UXG">
    <property type="method" value="EM"/>
    <property type="resolution" value="3.08 A"/>
    <property type="chains" value="E/F/G/H=1-108"/>
</dbReference>
<dbReference type="PDB" id="8UXH">
    <property type="method" value="EM"/>
    <property type="resolution" value="3.52 A"/>
    <property type="chains" value="E/F/G/H=1-108"/>
</dbReference>
<dbReference type="PDB" id="8UXI">
    <property type="method" value="EM"/>
    <property type="resolution" value="3.29 A"/>
    <property type="chains" value="E/F/G/H=1-108"/>
</dbReference>
<dbReference type="PDB" id="8UXL">
    <property type="method" value="EM"/>
    <property type="resolution" value="3.12 A"/>
    <property type="chains" value="E/F/G/H=1-108"/>
</dbReference>
<dbReference type="PDB" id="8UXM">
    <property type="method" value="EM"/>
    <property type="resolution" value="3.56 A"/>
    <property type="chains" value="E/F/G/H=1-108"/>
</dbReference>
<dbReference type="PDB" id="8XJI">
    <property type="method" value="EM"/>
    <property type="resolution" value="3.91 A"/>
    <property type="chains" value="E/F/G/H=2-108"/>
</dbReference>
<dbReference type="PDB" id="8XKH">
    <property type="method" value="EM"/>
    <property type="resolution" value="3.87 A"/>
    <property type="chains" value="E/F/G/H=2-108"/>
</dbReference>
<dbReference type="PDB" id="8XLF">
    <property type="method" value="EM"/>
    <property type="resolution" value="3.62 A"/>
    <property type="chains" value="E/F/G/H=2-108"/>
</dbReference>
<dbReference type="PDB" id="8XLH">
    <property type="method" value="EM"/>
    <property type="resolution" value="3.62 A"/>
    <property type="chains" value="E/F/G/H=2-108"/>
</dbReference>
<dbReference type="PDB" id="8Y40">
    <property type="method" value="EM"/>
    <property type="resolution" value="3.58 A"/>
    <property type="chains" value="E/F/G/H=2-108"/>
</dbReference>
<dbReference type="PDB" id="9C1E">
    <property type="method" value="EM"/>
    <property type="resolution" value="2.89 A"/>
    <property type="chains" value="A/C/E/G=2-108"/>
</dbReference>
<dbReference type="PDB" id="9C1F">
    <property type="method" value="EM"/>
    <property type="resolution" value="3.22 A"/>
    <property type="chains" value="A/C/E/G=2-108"/>
</dbReference>
<dbReference type="PDB" id="9CGP">
    <property type="method" value="EM"/>
    <property type="resolution" value="3.34 A"/>
    <property type="chains" value="E/F/G/H=2-108"/>
</dbReference>
<dbReference type="PDB" id="9CGQ">
    <property type="method" value="EM"/>
    <property type="resolution" value="3.23 A"/>
    <property type="chains" value="E/F/G/H=2-108"/>
</dbReference>
<dbReference type="PDBsum" id="1C9H"/>
<dbReference type="PDBsum" id="4C02"/>
<dbReference type="PDBsum" id="4IQ2"/>
<dbReference type="PDBsum" id="4IQC"/>
<dbReference type="PDBsum" id="5HKG"/>
<dbReference type="PDBsum" id="5L1D"/>
<dbReference type="PDBsum" id="5T15"/>
<dbReference type="PDBsum" id="5T9M"/>
<dbReference type="PDBsum" id="5T9N"/>
<dbReference type="PDBsum" id="5T9R"/>
<dbReference type="PDBsum" id="5T9S"/>
<dbReference type="PDBsum" id="5T9V"/>
<dbReference type="PDBsum" id="5TA3"/>
<dbReference type="PDBsum" id="5TAL"/>
<dbReference type="PDBsum" id="5TAM"/>
<dbReference type="PDBsum" id="5TAN"/>
<dbReference type="PDBsum" id="5TAP"/>
<dbReference type="PDBsum" id="5TAQ"/>
<dbReference type="PDBsum" id="5TAS"/>
<dbReference type="PDBsum" id="5TAT"/>
<dbReference type="PDBsum" id="5TAU"/>
<dbReference type="PDBsum" id="5TAV"/>
<dbReference type="PDBsum" id="5TAW"/>
<dbReference type="PDBsum" id="5TAX"/>
<dbReference type="PDBsum" id="5TAY"/>
<dbReference type="PDBsum" id="5TAZ"/>
<dbReference type="PDBsum" id="5TB0"/>
<dbReference type="PDBsum" id="5TB1"/>
<dbReference type="PDBsum" id="5TB2"/>
<dbReference type="PDBsum" id="5TB3"/>
<dbReference type="PDBsum" id="5TB4"/>
<dbReference type="PDBsum" id="6JGZ"/>
<dbReference type="PDBsum" id="6JH6"/>
<dbReference type="PDBsum" id="6JHN"/>
<dbReference type="PDBsum" id="6JI0"/>
<dbReference type="PDBsum" id="6JI8"/>
<dbReference type="PDBsum" id="6JII"/>
<dbReference type="PDBsum" id="6JIU"/>
<dbReference type="PDBsum" id="6JIY"/>
<dbReference type="PDBsum" id="6JRR"/>
<dbReference type="PDBsum" id="6JRS"/>
<dbReference type="PDBsum" id="6M2W"/>
<dbReference type="PDBsum" id="6PV6"/>
<dbReference type="PDBsum" id="6W1N"/>
<dbReference type="PDBsum" id="6WOT"/>
<dbReference type="PDBsum" id="6WOU"/>
<dbReference type="PDBsum" id="6WOV"/>
<dbReference type="PDBsum" id="6X32"/>
<dbReference type="PDBsum" id="6X33"/>
<dbReference type="PDBsum" id="6X34"/>
<dbReference type="PDBsum" id="6X35"/>
<dbReference type="PDBsum" id="6X36"/>
<dbReference type="PDBsum" id="7CF9"/>
<dbReference type="PDBsum" id="7JMF"/>
<dbReference type="PDBsum" id="7JMG"/>
<dbReference type="PDBsum" id="7JMH"/>
<dbReference type="PDBsum" id="7JMI"/>
<dbReference type="PDBsum" id="7JMJ"/>
<dbReference type="PDBsum" id="7M6A"/>
<dbReference type="PDBsum" id="7M6L"/>
<dbReference type="PDBsum" id="7T64"/>
<dbReference type="PDBsum" id="7T65"/>
<dbReference type="PDBsum" id="7U9Q"/>
<dbReference type="PDBsum" id="7U9R"/>
<dbReference type="PDBsum" id="7U9T"/>
<dbReference type="PDBsum" id="7U9X"/>
<dbReference type="PDBsum" id="7U9Z"/>
<dbReference type="PDBsum" id="7UA1"/>
<dbReference type="PDBsum" id="7UA3"/>
<dbReference type="PDBsum" id="7UA4"/>
<dbReference type="PDBsum" id="7UA5"/>
<dbReference type="PDBsum" id="7UA9"/>
<dbReference type="PDBsum" id="7VML"/>
<dbReference type="PDBsum" id="7VMM"/>
<dbReference type="PDBsum" id="7VMN"/>
<dbReference type="PDBsum" id="7VMO"/>
<dbReference type="PDBsum" id="7VMP"/>
<dbReference type="PDBsum" id="7VMQ"/>
<dbReference type="PDBsum" id="7VMR"/>
<dbReference type="PDBsum" id="7VMS"/>
<dbReference type="PDBsum" id="8DTY"/>
<dbReference type="PDBsum" id="8DTZ"/>
<dbReference type="PDBsum" id="8DUJ"/>
<dbReference type="PDBsum" id="8DVE"/>
<dbReference type="PDBsum" id="8DVV"/>
<dbReference type="PDBsum" id="8SEN"/>
<dbReference type="PDBsum" id="8SEO"/>
<dbReference type="PDBsum" id="8SEP"/>
<dbReference type="PDBsum" id="8SEQ"/>
<dbReference type="PDBsum" id="8SER"/>
<dbReference type="PDBsum" id="8SES"/>
<dbReference type="PDBsum" id="8SET"/>
<dbReference type="PDBsum" id="8UQ2"/>
<dbReference type="PDBsum" id="8UQ3"/>
<dbReference type="PDBsum" id="8UQ4"/>
<dbReference type="PDBsum" id="8UXC"/>
<dbReference type="PDBsum" id="8UXE"/>
<dbReference type="PDBsum" id="8UXF"/>
<dbReference type="PDBsum" id="8UXG"/>
<dbReference type="PDBsum" id="8UXH"/>
<dbReference type="PDBsum" id="8UXI"/>
<dbReference type="PDBsum" id="8UXL"/>
<dbReference type="PDBsum" id="8UXM"/>
<dbReference type="PDBsum" id="8XJI"/>
<dbReference type="PDBsum" id="8XKH"/>
<dbReference type="PDBsum" id="8XLF"/>
<dbReference type="PDBsum" id="8XLH"/>
<dbReference type="PDBsum" id="8Y40"/>
<dbReference type="PDBsum" id="9C1E"/>
<dbReference type="PDBsum" id="9C1F"/>
<dbReference type="PDBsum" id="9CGP"/>
<dbReference type="PDBsum" id="9CGQ"/>
<dbReference type="BMRB" id="P68106"/>
<dbReference type="EMDB" id="EMD-20486"/>
<dbReference type="EMDB" id="EMD-21513"/>
<dbReference type="EMDB" id="EMD-21860"/>
<dbReference type="EMDB" id="EMD-21861"/>
<dbReference type="EMDB" id="EMD-21862"/>
<dbReference type="EMDB" id="EMD-22015"/>
<dbReference type="EMDB" id="EMD-22016"/>
<dbReference type="EMDB" id="EMD-22017"/>
<dbReference type="EMDB" id="EMD-22018"/>
<dbReference type="EMDB" id="EMD-22019"/>
<dbReference type="EMDB" id="EMD-22392"/>
<dbReference type="EMDB" id="EMD-22393"/>
<dbReference type="EMDB" id="EMD-22394"/>
<dbReference type="EMDB" id="EMD-22395"/>
<dbReference type="EMDB" id="EMD-22396"/>
<dbReference type="EMDB" id="EMD-23692"/>
<dbReference type="EMDB" id="EMD-23699"/>
<dbReference type="EMDB" id="EMD-25709"/>
<dbReference type="EMDB" id="EMD-25710"/>
<dbReference type="EMDB" id="EMD-26405"/>
<dbReference type="EMDB" id="EMD-26407"/>
<dbReference type="EMDB" id="EMD-26408"/>
<dbReference type="EMDB" id="EMD-26409"/>
<dbReference type="EMDB" id="EMD-26410"/>
<dbReference type="EMDB" id="EMD-26412"/>
<dbReference type="EMDB" id="EMD-26413"/>
<dbReference type="EMDB" id="EMD-26414"/>
<dbReference type="EMDB" id="EMD-26415"/>
<dbReference type="EMDB" id="EMD-26416"/>
<dbReference type="EMDB" id="EMD-27711"/>
<dbReference type="EMDB" id="EMD-27712"/>
<dbReference type="EMDB" id="EMD-27721"/>
<dbReference type="EMDB" id="EMD-27736"/>
<dbReference type="EMDB" id="EMD-27746"/>
<dbReference type="EMDB" id="EMD-30067"/>
<dbReference type="EMDB" id="EMD-30343"/>
<dbReference type="EMDB" id="EMD-32036"/>
<dbReference type="EMDB" id="EMD-32037"/>
<dbReference type="EMDB" id="EMD-38398"/>
<dbReference type="EMDB" id="EMD-38417"/>
<dbReference type="EMDB" id="EMD-38447"/>
<dbReference type="EMDB" id="EMD-38448"/>
<dbReference type="EMDB" id="EMD-38908"/>
<dbReference type="EMDB" id="EMD-40422"/>
<dbReference type="EMDB" id="EMD-40423"/>
<dbReference type="EMDB" id="EMD-40424"/>
<dbReference type="EMDB" id="EMD-40425"/>
<dbReference type="EMDB" id="EMD-40426"/>
<dbReference type="EMDB" id="EMD-40427"/>
<dbReference type="EMDB" id="EMD-40428"/>
<dbReference type="EMDB" id="EMD-42458"/>
<dbReference type="EMDB" id="EMD-42459"/>
<dbReference type="EMDB" id="EMD-42460"/>
<dbReference type="EMDB" id="EMD-42759"/>
<dbReference type="EMDB" id="EMD-42761"/>
<dbReference type="EMDB" id="EMD-42762"/>
<dbReference type="EMDB" id="EMD-42763"/>
<dbReference type="EMDB" id="EMD-42764"/>
<dbReference type="EMDB" id="EMD-42765"/>
<dbReference type="EMDB" id="EMD-42768"/>
<dbReference type="EMDB" id="EMD-42769"/>
<dbReference type="EMDB" id="EMD-45116"/>
<dbReference type="EMDB" id="EMD-45117"/>
<dbReference type="EMDB" id="EMD-45493"/>
<dbReference type="EMDB" id="EMD-45497"/>
<dbReference type="EMDB" id="EMD-45584"/>
<dbReference type="EMDB" id="EMD-45585"/>
<dbReference type="EMDB" id="EMD-8303"/>
<dbReference type="EMDB" id="EMD-8342"/>
<dbReference type="EMDB" id="EMD-8372"/>
<dbReference type="EMDB" id="EMD-8373"/>
<dbReference type="EMDB" id="EMD-8374"/>
<dbReference type="EMDB" id="EMD-8375"/>
<dbReference type="EMDB" id="EMD-8376"/>
<dbReference type="EMDB" id="EMD-8377"/>
<dbReference type="EMDB" id="EMD-8378"/>
<dbReference type="EMDB" id="EMD-8379"/>
<dbReference type="EMDB" id="EMD-8380"/>
<dbReference type="EMDB" id="EMD-8381"/>
<dbReference type="EMDB" id="EMD-8382"/>
<dbReference type="EMDB" id="EMD-8383"/>
<dbReference type="EMDB" id="EMD-8384"/>
<dbReference type="EMDB" id="EMD-8385"/>
<dbReference type="EMDB" id="EMD-8386"/>
<dbReference type="EMDB" id="EMD-8387"/>
<dbReference type="EMDB" id="EMD-8388"/>
<dbReference type="EMDB" id="EMD-8389"/>
<dbReference type="EMDB" id="EMD-8390"/>
<dbReference type="EMDB" id="EMD-8391"/>
<dbReference type="EMDB" id="EMD-8392"/>
<dbReference type="EMDB" id="EMD-8393"/>
<dbReference type="EMDB" id="EMD-8394"/>
<dbReference type="EMDB" id="EMD-8395"/>
<dbReference type="EMDB" id="EMD-9824"/>
<dbReference type="EMDB" id="EMD-9825"/>
<dbReference type="EMDB" id="EMD-9826"/>
<dbReference type="EMDB" id="EMD-9831"/>
<dbReference type="EMDB" id="EMD-9833"/>
<dbReference type="EMDB" id="EMD-9834"/>
<dbReference type="EMDB" id="EMD-9836"/>
<dbReference type="EMDB" id="EMD-9837"/>
<dbReference type="EMDB" id="EMD-9879"/>
<dbReference type="EMDB" id="EMD-9880"/>
<dbReference type="SMR" id="P68106"/>
<dbReference type="BioGRID" id="108571">
    <property type="interactions" value="32"/>
</dbReference>
<dbReference type="DIP" id="DIP-48796N"/>
<dbReference type="FunCoup" id="P68106">
    <property type="interactions" value="849"/>
</dbReference>
<dbReference type="IntAct" id="P68106">
    <property type="interactions" value="13"/>
</dbReference>
<dbReference type="STRING" id="9606.ENSP00000370373"/>
<dbReference type="BindingDB" id="P68106"/>
<dbReference type="ChEMBL" id="CHEMBL2430"/>
<dbReference type="DrugCentral" id="P68106"/>
<dbReference type="iPTMnet" id="P68106"/>
<dbReference type="PhosphoSitePlus" id="P68106"/>
<dbReference type="BioMuta" id="FKBP1B"/>
<dbReference type="DMDM" id="61224185"/>
<dbReference type="jPOST" id="P68106"/>
<dbReference type="MassIVE" id="P68106"/>
<dbReference type="PaxDb" id="9606-ENSP00000370373"/>
<dbReference type="PeptideAtlas" id="P68106"/>
<dbReference type="ProteomicsDB" id="57530"/>
<dbReference type="ProteomicsDB" id="57531">
    <molecule id="P68106-2"/>
</dbReference>
<dbReference type="Pumba" id="P68106"/>
<dbReference type="Antibodypedia" id="27417">
    <property type="antibodies" value="133 antibodies from 30 providers"/>
</dbReference>
<dbReference type="DNASU" id="2281"/>
<dbReference type="Ensembl" id="ENST00000380986.9">
    <molecule id="P68106-1"/>
    <property type="protein sequence ID" value="ENSP00000370373.4"/>
    <property type="gene ID" value="ENSG00000119782.14"/>
</dbReference>
<dbReference type="Ensembl" id="ENST00000380991.8">
    <molecule id="P68106-2"/>
    <property type="protein sequence ID" value="ENSP00000370379.4"/>
    <property type="gene ID" value="ENSG00000119782.14"/>
</dbReference>
<dbReference type="GeneID" id="2281"/>
<dbReference type="KEGG" id="hsa:2281"/>
<dbReference type="MANE-Select" id="ENST00000380986.9">
    <property type="protein sequence ID" value="ENSP00000370373.4"/>
    <property type="RefSeq nucleotide sequence ID" value="NM_004116.5"/>
    <property type="RefSeq protein sequence ID" value="NP_004107.1"/>
</dbReference>
<dbReference type="UCSC" id="uc002rer.4">
    <property type="organism name" value="human"/>
</dbReference>
<dbReference type="AGR" id="HGNC:3712"/>
<dbReference type="CTD" id="2281"/>
<dbReference type="DisGeNET" id="2281"/>
<dbReference type="GeneCards" id="FKBP1B"/>
<dbReference type="HGNC" id="HGNC:3712">
    <property type="gene designation" value="FKBP1B"/>
</dbReference>
<dbReference type="HPA" id="ENSG00000119782">
    <property type="expression patterns" value="Tissue enhanced (brain)"/>
</dbReference>
<dbReference type="MIM" id="600620">
    <property type="type" value="gene"/>
</dbReference>
<dbReference type="neXtProt" id="NX_P68106"/>
<dbReference type="OpenTargets" id="ENSG00000119782"/>
<dbReference type="PharmGKB" id="PA28154"/>
<dbReference type="VEuPathDB" id="HostDB:ENSG00000119782"/>
<dbReference type="eggNOG" id="KOG0544">
    <property type="taxonomic scope" value="Eukaryota"/>
</dbReference>
<dbReference type="GeneTree" id="ENSGT00940000153311"/>
<dbReference type="HOGENOM" id="CLU_196166_0_0_1"/>
<dbReference type="InParanoid" id="P68106"/>
<dbReference type="OMA" id="EQFDASW"/>
<dbReference type="OrthoDB" id="1902587at2759"/>
<dbReference type="PAN-GO" id="P68106">
    <property type="GO annotations" value="6 GO annotations based on evolutionary models"/>
</dbReference>
<dbReference type="PhylomeDB" id="P68106"/>
<dbReference type="TreeFam" id="TF105291"/>
<dbReference type="PathwayCommons" id="P68106"/>
<dbReference type="Reactome" id="R-HSA-2672351">
    <property type="pathway name" value="Stimuli-sensing channels"/>
</dbReference>
<dbReference type="Reactome" id="R-HSA-5578775">
    <property type="pathway name" value="Ion homeostasis"/>
</dbReference>
<dbReference type="SignaLink" id="P68106"/>
<dbReference type="BioGRID-ORCS" id="2281">
    <property type="hits" value="8 hits in 1154 CRISPR screens"/>
</dbReference>
<dbReference type="CD-CODE" id="FB4E32DD">
    <property type="entry name" value="Presynaptic clusters and postsynaptic densities"/>
</dbReference>
<dbReference type="ChiTaRS" id="FKBP1B">
    <property type="organism name" value="human"/>
</dbReference>
<dbReference type="EvolutionaryTrace" id="P68106"/>
<dbReference type="GeneWiki" id="FKBP1B"/>
<dbReference type="GenomeRNAi" id="2281"/>
<dbReference type="Pharos" id="P68106">
    <property type="development level" value="Tchem"/>
</dbReference>
<dbReference type="PRO" id="PR:P68106"/>
<dbReference type="Proteomes" id="UP000005640">
    <property type="component" value="Chromosome 2"/>
</dbReference>
<dbReference type="RNAct" id="P68106">
    <property type="molecule type" value="protein"/>
</dbReference>
<dbReference type="Bgee" id="ENSG00000119782">
    <property type="expression patterns" value="Expressed in cortical plate and 97 other cell types or tissues"/>
</dbReference>
<dbReference type="ExpressionAtlas" id="P68106">
    <property type="expression patterns" value="baseline and differential"/>
</dbReference>
<dbReference type="GO" id="GO:0034704">
    <property type="term" value="C:calcium channel complex"/>
    <property type="evidence" value="ECO:0000314"/>
    <property type="project" value="BHF-UCL"/>
</dbReference>
<dbReference type="GO" id="GO:0005737">
    <property type="term" value="C:cytoplasm"/>
    <property type="evidence" value="ECO:0000314"/>
    <property type="project" value="BHF-UCL"/>
</dbReference>
<dbReference type="GO" id="GO:0016020">
    <property type="term" value="C:membrane"/>
    <property type="evidence" value="ECO:0000314"/>
    <property type="project" value="BHF-UCL"/>
</dbReference>
<dbReference type="GO" id="GO:0033017">
    <property type="term" value="C:sarcoplasmic reticulum membrane"/>
    <property type="evidence" value="ECO:0000318"/>
    <property type="project" value="GO_Central"/>
</dbReference>
<dbReference type="GO" id="GO:0030018">
    <property type="term" value="C:Z disc"/>
    <property type="evidence" value="ECO:0000314"/>
    <property type="project" value="BHF-UCL"/>
</dbReference>
<dbReference type="GO" id="GO:0019855">
    <property type="term" value="F:calcium channel inhibitor activity"/>
    <property type="evidence" value="ECO:0000314"/>
    <property type="project" value="BHF-UCL"/>
</dbReference>
<dbReference type="GO" id="GO:0005246">
    <property type="term" value="F:calcium channel regulator activity"/>
    <property type="evidence" value="ECO:0000315"/>
    <property type="project" value="BHF-UCL"/>
</dbReference>
<dbReference type="GO" id="GO:0005528">
    <property type="term" value="F:FK506 binding"/>
    <property type="evidence" value="ECO:0000314"/>
    <property type="project" value="BHF-UCL"/>
</dbReference>
<dbReference type="GO" id="GO:0003755">
    <property type="term" value="F:peptidyl-prolyl cis-trans isomerase activity"/>
    <property type="evidence" value="ECO:0000314"/>
    <property type="project" value="BHF-UCL"/>
</dbReference>
<dbReference type="GO" id="GO:0005102">
    <property type="term" value="F:signaling receptor binding"/>
    <property type="evidence" value="ECO:0000353"/>
    <property type="project" value="BHF-UCL"/>
</dbReference>
<dbReference type="GO" id="GO:0044325">
    <property type="term" value="F:transmembrane transporter binding"/>
    <property type="evidence" value="ECO:0000250"/>
    <property type="project" value="BHF-UCL"/>
</dbReference>
<dbReference type="GO" id="GO:0006458">
    <property type="term" value="P:'de novo' protein folding"/>
    <property type="evidence" value="ECO:0000304"/>
    <property type="project" value="BHF-UCL"/>
</dbReference>
<dbReference type="GO" id="GO:0019722">
    <property type="term" value="P:calcium-mediated signaling"/>
    <property type="evidence" value="ECO:0000316"/>
    <property type="project" value="BHF-UCL"/>
</dbReference>
<dbReference type="GO" id="GO:0035773">
    <property type="term" value="P:insulin secretion involved in cellular response to glucose stimulus"/>
    <property type="evidence" value="ECO:0007669"/>
    <property type="project" value="Ensembl"/>
</dbReference>
<dbReference type="GO" id="GO:0050849">
    <property type="term" value="P:negative regulation of calcium-mediated signaling"/>
    <property type="evidence" value="ECO:0000314"/>
    <property type="project" value="BHF-UCL"/>
</dbReference>
<dbReference type="GO" id="GO:0010459">
    <property type="term" value="P:negative regulation of heart rate"/>
    <property type="evidence" value="ECO:0000250"/>
    <property type="project" value="BHF-UCL"/>
</dbReference>
<dbReference type="GO" id="GO:0061179">
    <property type="term" value="P:negative regulation of insulin secretion involved in cellular response to glucose stimulus"/>
    <property type="evidence" value="ECO:0007669"/>
    <property type="project" value="Ensembl"/>
</dbReference>
<dbReference type="GO" id="GO:0051280">
    <property type="term" value="P:negative regulation of release of sequestered calcium ion into cytosol"/>
    <property type="evidence" value="ECO:0000314"/>
    <property type="project" value="BHF-UCL"/>
</dbReference>
<dbReference type="GO" id="GO:0019227">
    <property type="term" value="P:neuronal action potential propagation"/>
    <property type="evidence" value="ECO:0007669"/>
    <property type="project" value="Ensembl"/>
</dbReference>
<dbReference type="GO" id="GO:0007204">
    <property type="term" value="P:positive regulation of cytosolic calcium ion concentration"/>
    <property type="evidence" value="ECO:0007669"/>
    <property type="project" value="Ensembl"/>
</dbReference>
<dbReference type="GO" id="GO:0051284">
    <property type="term" value="P:positive regulation of sequestering of calcium ion"/>
    <property type="evidence" value="ECO:0000314"/>
    <property type="project" value="BHF-UCL"/>
</dbReference>
<dbReference type="GO" id="GO:0051604">
    <property type="term" value="P:protein maturation"/>
    <property type="evidence" value="ECO:0000304"/>
    <property type="project" value="BHF-UCL"/>
</dbReference>
<dbReference type="GO" id="GO:0042026">
    <property type="term" value="P:protein refolding"/>
    <property type="evidence" value="ECO:0000304"/>
    <property type="project" value="BHF-UCL"/>
</dbReference>
<dbReference type="GO" id="GO:0010881">
    <property type="term" value="P:regulation of cardiac muscle contraction by regulation of the release of sequestered calcium ion"/>
    <property type="evidence" value="ECO:0000314"/>
    <property type="project" value="BHF-UCL"/>
</dbReference>
<dbReference type="GO" id="GO:0010880">
    <property type="term" value="P:regulation of release of sequestered calcium ion into cytosol by sarcoplasmic reticulum"/>
    <property type="evidence" value="ECO:0000314"/>
    <property type="project" value="BHF-UCL"/>
</dbReference>
<dbReference type="GO" id="GO:0051209">
    <property type="term" value="P:release of sequestered calcium ion into cytosol"/>
    <property type="evidence" value="ECO:0007669"/>
    <property type="project" value="Ensembl"/>
</dbReference>
<dbReference type="GO" id="GO:0051775">
    <property type="term" value="P:response to redox state"/>
    <property type="evidence" value="ECO:0000314"/>
    <property type="project" value="BHF-UCL"/>
</dbReference>
<dbReference type="GO" id="GO:0006939">
    <property type="term" value="P:smooth muscle contraction"/>
    <property type="evidence" value="ECO:0007669"/>
    <property type="project" value="Ensembl"/>
</dbReference>
<dbReference type="GO" id="GO:0042098">
    <property type="term" value="P:T cell proliferation"/>
    <property type="evidence" value="ECO:0007669"/>
    <property type="project" value="Ensembl"/>
</dbReference>
<dbReference type="FunFam" id="3.10.50.40:FF:000008">
    <property type="entry name" value="Peptidylprolyl isomerase"/>
    <property type="match status" value="1"/>
</dbReference>
<dbReference type="Gene3D" id="3.10.50.40">
    <property type="match status" value="1"/>
</dbReference>
<dbReference type="InterPro" id="IPR050689">
    <property type="entry name" value="FKBP-type_PPIase"/>
</dbReference>
<dbReference type="InterPro" id="IPR046357">
    <property type="entry name" value="PPIase_dom_sf"/>
</dbReference>
<dbReference type="InterPro" id="IPR001179">
    <property type="entry name" value="PPIase_FKBP_dom"/>
</dbReference>
<dbReference type="PANTHER" id="PTHR10516">
    <property type="entry name" value="PEPTIDYL-PROLYL CIS-TRANS ISOMERASE"/>
    <property type="match status" value="1"/>
</dbReference>
<dbReference type="PANTHER" id="PTHR10516:SF429">
    <property type="entry name" value="PEPTIDYL-PROLYL CIS-TRANS ISOMERASE FKBP1B"/>
    <property type="match status" value="1"/>
</dbReference>
<dbReference type="Pfam" id="PF00254">
    <property type="entry name" value="FKBP_C"/>
    <property type="match status" value="1"/>
</dbReference>
<dbReference type="SUPFAM" id="SSF54534">
    <property type="entry name" value="FKBP-like"/>
    <property type="match status" value="1"/>
</dbReference>
<dbReference type="PROSITE" id="PS50059">
    <property type="entry name" value="FKBP_PPIASE"/>
    <property type="match status" value="1"/>
</dbReference>
<sequence length="108" mass="11783">MGVEIETISPGDGRTFPKKGQTCVVHYTGMLQNGKKFDSSRDRNKPFKFRIGKQEVIKGFEEGAAQMSLGQRAKLTCTPDVAYGATGHPGVIPPNATLIFDVELLNLE</sequence>
<protein>
    <recommendedName>
        <fullName evidence="9">Peptidyl-prolyl cis-trans isomerase FKBP1B</fullName>
        <shortName>PPIase FKBP1B</shortName>
        <ecNumber evidence="4 5">5.2.1.8</ecNumber>
    </recommendedName>
    <alternativeName>
        <fullName>12.6 kDa FK506-binding protein</fullName>
        <shortName>12.6 kDa FKBP</shortName>
        <shortName>FKBP-12.6</shortName>
    </alternativeName>
    <alternativeName>
        <fullName>FK506-binding protein 1B</fullName>
        <shortName>FKBP-1B</shortName>
    </alternativeName>
    <alternativeName>
        <fullName>Immunophilin FKBP12.6</fullName>
    </alternativeName>
    <alternativeName>
        <fullName>Rotamase</fullName>
    </alternativeName>
    <alternativeName>
        <fullName>h-FKBP-12</fullName>
    </alternativeName>
</protein>
<evidence type="ECO:0000250" key="1"/>
<evidence type="ECO:0000255" key="2">
    <source>
        <dbReference type="PROSITE-ProRule" id="PRU00277"/>
    </source>
</evidence>
<evidence type="ECO:0000269" key="3">
    <source>
    </source>
</evidence>
<evidence type="ECO:0000269" key="4">
    <source>
    </source>
</evidence>
<evidence type="ECO:0000269" key="5">
    <source>
    </source>
</evidence>
<evidence type="ECO:0000303" key="6">
    <source>
    </source>
</evidence>
<evidence type="ECO:0000303" key="7">
    <source>
    </source>
</evidence>
<evidence type="ECO:0000303" key="8">
    <source ref="3"/>
</evidence>
<evidence type="ECO:0000305" key="9"/>
<evidence type="ECO:0000312" key="10">
    <source>
        <dbReference type="HGNC" id="HGNC:3712"/>
    </source>
</evidence>
<evidence type="ECO:0007829" key="11">
    <source>
        <dbReference type="PDB" id="5HKG"/>
    </source>
</evidence>
<feature type="chain" id="PRO_0000075295" description="Peptidyl-prolyl cis-trans isomerase FKBP1B">
    <location>
        <begin position="1"/>
        <end position="108"/>
    </location>
</feature>
<feature type="domain" description="PPIase FKBP-type" evidence="2">
    <location>
        <begin position="20"/>
        <end position="108"/>
    </location>
</feature>
<feature type="splice variant" id="VSP_005184" description="In isoform 2." evidence="6 7 8">
    <original>MSLGQRAKLTCTPDVAYGATGHPGVIPPNATLIFDVELLNLE</original>
    <variation>LGPLSPLPICPHPC</variation>
    <location>
        <begin position="67"/>
        <end position="108"/>
    </location>
</feature>
<feature type="strand" evidence="11">
    <location>
        <begin position="3"/>
        <end position="9"/>
    </location>
</feature>
<feature type="strand" evidence="11">
    <location>
        <begin position="22"/>
        <end position="31"/>
    </location>
</feature>
<feature type="strand" evidence="11">
    <location>
        <begin position="36"/>
        <end position="39"/>
    </location>
</feature>
<feature type="turn" evidence="11">
    <location>
        <begin position="40"/>
        <end position="44"/>
    </location>
</feature>
<feature type="strand" evidence="11">
    <location>
        <begin position="47"/>
        <end position="50"/>
    </location>
</feature>
<feature type="turn" evidence="11">
    <location>
        <begin position="51"/>
        <end position="54"/>
    </location>
</feature>
<feature type="helix" evidence="11">
    <location>
        <begin position="58"/>
        <end position="65"/>
    </location>
</feature>
<feature type="strand" evidence="11">
    <location>
        <begin position="72"/>
        <end position="77"/>
    </location>
</feature>
<feature type="helix" evidence="11">
    <location>
        <begin position="79"/>
        <end position="81"/>
    </location>
</feature>
<feature type="turn" evidence="11">
    <location>
        <begin position="82"/>
        <end position="86"/>
    </location>
</feature>
<feature type="turn" evidence="11">
    <location>
        <begin position="89"/>
        <end position="91"/>
    </location>
</feature>
<feature type="strand" evidence="11">
    <location>
        <begin position="98"/>
        <end position="108"/>
    </location>
</feature>
<name>FKB1B_HUMAN</name>
<proteinExistence type="evidence at protein level"/>
<organism>
    <name type="scientific">Homo sapiens</name>
    <name type="common">Human</name>
    <dbReference type="NCBI Taxonomy" id="9606"/>
    <lineage>
        <taxon>Eukaryota</taxon>
        <taxon>Metazoa</taxon>
        <taxon>Chordata</taxon>
        <taxon>Craniata</taxon>
        <taxon>Vertebrata</taxon>
        <taxon>Euteleostomi</taxon>
        <taxon>Mammalia</taxon>
        <taxon>Eutheria</taxon>
        <taxon>Euarchontoglires</taxon>
        <taxon>Primates</taxon>
        <taxon>Haplorrhini</taxon>
        <taxon>Catarrhini</taxon>
        <taxon>Hominidae</taxon>
        <taxon>Homo</taxon>
    </lineage>
</organism>
<accession>P68106</accession>
<accession>Q13664</accession>
<accession>Q16645</accession>
<accession>Q53TM2</accession>
<accession>Q9BQ40</accession>
<comment type="function">
    <text evidence="4 5">Has the potential to contribute to the immunosuppressive and toxic effects of FK506 and rapamycin. PPIases accelerate the folding of proteins. It catalyzes the cis-trans isomerization of proline imidic peptide bonds in oligopeptides.</text>
</comment>
<comment type="catalytic activity">
    <reaction evidence="4 5">
        <text>[protein]-peptidylproline (omega=180) = [protein]-peptidylproline (omega=0)</text>
        <dbReference type="Rhea" id="RHEA:16237"/>
        <dbReference type="Rhea" id="RHEA-COMP:10747"/>
        <dbReference type="Rhea" id="RHEA-COMP:10748"/>
        <dbReference type="ChEBI" id="CHEBI:83833"/>
        <dbReference type="ChEBI" id="CHEBI:83834"/>
        <dbReference type="EC" id="5.2.1.8"/>
    </reaction>
</comment>
<comment type="activity regulation">
    <text>Inhibited by both FK506 and rapamycin.</text>
</comment>
<comment type="subunit">
    <text evidence="3">Identified in a complex composed of RYR2, FKBP1B, PKA catalytic subunit, PRKAR2A, AKAP6, and the protein phosphatases PP2A and PP1. Interacts directly with RYR2.</text>
</comment>
<comment type="interaction">
    <interactant intactId="EBI-6693977">
        <id>P68106</id>
    </interactant>
    <interactant intactId="EBI-10173507">
        <id>Q6UY14-3</id>
        <label>ADAMTSL4</label>
    </interactant>
    <organismsDiffer>false</organismsDiffer>
    <experiments>3</experiments>
</comment>
<comment type="interaction">
    <interactant intactId="EBI-6693977">
        <id>P68106</id>
    </interactant>
    <interactant intactId="EBI-351018">
        <id>Q13557</id>
        <label>CAMK2D</label>
    </interactant>
    <organismsDiffer>false</organismsDiffer>
    <experiments>3</experiments>
</comment>
<comment type="interaction">
    <interactant intactId="EBI-6693977">
        <id>P68106</id>
    </interactant>
    <interactant intactId="EBI-10172181">
        <id>Q53SE7</id>
        <label>FLJ13057</label>
    </interactant>
    <organismsDiffer>false</organismsDiffer>
    <experiments>3</experiments>
</comment>
<comment type="interaction">
    <interactant intactId="EBI-6693977">
        <id>P68106</id>
    </interactant>
    <interactant intactId="EBI-948001">
        <id>Q15323</id>
        <label>KRT31</label>
    </interactant>
    <organismsDiffer>false</organismsDiffer>
    <experiments>3</experiments>
</comment>
<comment type="interaction">
    <interactant intactId="EBI-6693977">
        <id>P68106</id>
    </interactant>
    <interactant intactId="EBI-10171697">
        <id>Q6A162</id>
        <label>KRT40</label>
    </interactant>
    <organismsDiffer>false</organismsDiffer>
    <experiments>3</experiments>
</comment>
<comment type="interaction">
    <interactant intactId="EBI-6693977">
        <id>P68106</id>
    </interactant>
    <interactant intactId="EBI-307352">
        <id>Q04864</id>
        <label>REL</label>
    </interactant>
    <organismsDiffer>false</organismsDiffer>
    <experiments>3</experiments>
</comment>
<comment type="interaction">
    <interactant intactId="EBI-6693977">
        <id>P68106</id>
    </interactant>
    <interactant intactId="EBI-1170425">
        <id>Q92736</id>
        <label>RYR2</label>
    </interactant>
    <organismsDiffer>false</organismsDiffer>
    <experiments>5</experiments>
</comment>
<comment type="interaction">
    <interactant intactId="EBI-6693977">
        <id>P68106</id>
    </interactant>
    <interactant intactId="EBI-749955">
        <id>Q86WT6</id>
        <label>TRIM69</label>
    </interactant>
    <organismsDiffer>false</organismsDiffer>
    <experiments>3</experiments>
</comment>
<comment type="interaction">
    <interactant intactId="EBI-15766566">
        <id>P68106-1</id>
    </interactant>
    <interactant intactId="EBI-397530">
        <id>P62161</id>
        <label>Calm3</label>
    </interactant>
    <organismsDiffer>true</organismsDiffer>
    <experiments>2</experiments>
</comment>
<comment type="interaction">
    <interactant intactId="EBI-15766566">
        <id>P68106-1</id>
    </interactant>
    <interactant intactId="EBI-6477441">
        <id>P11716</id>
        <label>RYR1</label>
    </interactant>
    <organismsDiffer>true</organismsDiffer>
    <experiments>2</experiments>
</comment>
<comment type="interaction">
    <interactant intactId="EBI-11998976">
        <id>P68106-2</id>
    </interactant>
    <interactant intactId="EBI-948001">
        <id>Q15323</id>
        <label>KRT31</label>
    </interactant>
    <organismsDiffer>false</organismsDiffer>
    <experiments>3</experiments>
</comment>
<comment type="interaction">
    <interactant intactId="EBI-11998976">
        <id>P68106-2</id>
    </interactant>
    <interactant intactId="EBI-11959885">
        <id>Q07627</id>
        <label>KRTAP1-1</label>
    </interactant>
    <organismsDiffer>false</organismsDiffer>
    <experiments>3</experiments>
</comment>
<comment type="interaction">
    <interactant intactId="EBI-11998976">
        <id>P68106-2</id>
    </interactant>
    <interactant intactId="EBI-10829018">
        <id>Q04864-2</id>
        <label>REL</label>
    </interactant>
    <organismsDiffer>false</organismsDiffer>
    <experiments>3</experiments>
</comment>
<comment type="interaction">
    <interactant intactId="EBI-11998976">
        <id>P68106-2</id>
    </interactant>
    <interactant intactId="EBI-11525489">
        <id>Q86WT6-2</id>
        <label>TRIM69</label>
    </interactant>
    <organismsDiffer>false</organismsDiffer>
    <experiments>3</experiments>
</comment>
<comment type="subcellular location">
    <subcellularLocation>
        <location evidence="1">Cytoplasm</location>
    </subcellularLocation>
    <subcellularLocation>
        <location evidence="1">Sarcoplasmic reticulum</location>
    </subcellularLocation>
</comment>
<comment type="alternative products">
    <event type="alternative splicing"/>
    <isoform>
        <id>P68106-1</id>
        <id>Q16645-1</id>
        <name>1</name>
        <sequence type="displayed"/>
    </isoform>
    <isoform>
        <id>P68106-2</id>
        <id>Q16645-2</id>
        <name>2</name>
        <sequence type="described" ref="VSP_005184"/>
    </isoform>
</comment>
<comment type="tissue specificity">
    <text evidence="3">Detected in heart muscle (at protein level). Isoform 1 and isoform 2 are ubiquitous with highest levels in brain and thymus.</text>
</comment>
<comment type="similarity">
    <text evidence="9">Belongs to the FKBP-type PPIase family. FKBP1 subfamily.</text>
</comment>
<gene>
    <name evidence="10" type="primary">FKBP1B</name>
    <name type="synonym">FKBP12.6</name>
    <name type="synonym">FKBP1L</name>
    <name type="synonym">FKBP9</name>
    <name type="synonym">OTK4</name>
</gene>